<keyword id="KW-0249">Electron transport</keyword>
<keyword id="KW-0349">Heme</keyword>
<keyword id="KW-0408">Iron</keyword>
<keyword id="KW-0472">Membrane</keyword>
<keyword id="KW-0479">Metal-binding</keyword>
<keyword id="KW-0496">Mitochondrion</keyword>
<keyword id="KW-0999">Mitochondrion inner membrane</keyword>
<keyword id="KW-0679">Respiratory chain</keyword>
<keyword id="KW-0812">Transmembrane</keyword>
<keyword id="KW-1133">Transmembrane helix</keyword>
<keyword id="KW-0813">Transport</keyword>
<keyword id="KW-0830">Ubiquinone</keyword>
<comment type="function">
    <text evidence="2">Component of the ubiquinol-cytochrome c reductase complex (complex III or cytochrome b-c1 complex) that is part of the mitochondrial respiratory chain. The b-c1 complex mediates electron transfer from ubiquinol to cytochrome c. Contributes to the generation of a proton gradient across the mitochondrial membrane that is then used for ATP synthesis.</text>
</comment>
<comment type="cofactor">
    <cofactor evidence="2">
        <name>heme b</name>
        <dbReference type="ChEBI" id="CHEBI:60344"/>
    </cofactor>
    <text evidence="2">Binds 2 heme b groups non-covalently.</text>
</comment>
<comment type="subunit">
    <text evidence="2">The cytochrome bc1 complex contains 3 respiratory subunits (MT-CYB, CYC1 and UQCRFS1), 2 core proteins (UQCRC1 and UQCRC2) and probably 6 low-molecular weight proteins.</text>
</comment>
<comment type="subcellular location">
    <subcellularLocation>
        <location evidence="2">Mitochondrion inner membrane</location>
        <topology evidence="2">Multi-pass membrane protein</topology>
    </subcellularLocation>
</comment>
<comment type="miscellaneous">
    <text evidence="1">Heme 1 (or BL or b562) is low-potential and absorbs at about 562 nm, and heme 2 (or BH or b566) is high-potential and absorbs at about 566 nm.</text>
</comment>
<comment type="similarity">
    <text evidence="3 4">Belongs to the cytochrome b family.</text>
</comment>
<comment type="caution">
    <text evidence="2">The full-length protein contains only eight transmembrane helices, not nine as predicted by bioinformatics tools.</text>
</comment>
<accession>O48090</accession>
<dbReference type="EMBL" id="U69835">
    <property type="protein sequence ID" value="AAC01868.1"/>
    <property type="molecule type" value="Genomic_DNA"/>
</dbReference>
<dbReference type="SMR" id="O48090"/>
<dbReference type="GO" id="GO:0005743">
    <property type="term" value="C:mitochondrial inner membrane"/>
    <property type="evidence" value="ECO:0007669"/>
    <property type="project" value="UniProtKB-SubCell"/>
</dbReference>
<dbReference type="GO" id="GO:0045275">
    <property type="term" value="C:respiratory chain complex III"/>
    <property type="evidence" value="ECO:0007669"/>
    <property type="project" value="InterPro"/>
</dbReference>
<dbReference type="GO" id="GO:0046872">
    <property type="term" value="F:metal ion binding"/>
    <property type="evidence" value="ECO:0007669"/>
    <property type="project" value="UniProtKB-KW"/>
</dbReference>
<dbReference type="GO" id="GO:0008121">
    <property type="term" value="F:ubiquinol-cytochrome-c reductase activity"/>
    <property type="evidence" value="ECO:0007669"/>
    <property type="project" value="InterPro"/>
</dbReference>
<dbReference type="GO" id="GO:0006122">
    <property type="term" value="P:mitochondrial electron transport, ubiquinol to cytochrome c"/>
    <property type="evidence" value="ECO:0007669"/>
    <property type="project" value="TreeGrafter"/>
</dbReference>
<dbReference type="CDD" id="cd00290">
    <property type="entry name" value="cytochrome_b_C"/>
    <property type="match status" value="1"/>
</dbReference>
<dbReference type="CDD" id="cd00284">
    <property type="entry name" value="Cytochrome_b_N"/>
    <property type="match status" value="1"/>
</dbReference>
<dbReference type="Gene3D" id="1.20.810.10">
    <property type="entry name" value="Cytochrome Bc1 Complex, Chain C"/>
    <property type="match status" value="1"/>
</dbReference>
<dbReference type="InterPro" id="IPR005798">
    <property type="entry name" value="Cyt_b/b6_C"/>
</dbReference>
<dbReference type="InterPro" id="IPR036150">
    <property type="entry name" value="Cyt_b/b6_C_sf"/>
</dbReference>
<dbReference type="InterPro" id="IPR005797">
    <property type="entry name" value="Cyt_b/b6_N"/>
</dbReference>
<dbReference type="InterPro" id="IPR027387">
    <property type="entry name" value="Cytb/b6-like_sf"/>
</dbReference>
<dbReference type="InterPro" id="IPR030689">
    <property type="entry name" value="Cytochrome_b"/>
</dbReference>
<dbReference type="InterPro" id="IPR048260">
    <property type="entry name" value="Cytochrome_b_C_euk/bac"/>
</dbReference>
<dbReference type="InterPro" id="IPR048259">
    <property type="entry name" value="Cytochrome_b_N_euk/bac"/>
</dbReference>
<dbReference type="InterPro" id="IPR016174">
    <property type="entry name" value="Di-haem_cyt_TM"/>
</dbReference>
<dbReference type="PANTHER" id="PTHR19271">
    <property type="entry name" value="CYTOCHROME B"/>
    <property type="match status" value="1"/>
</dbReference>
<dbReference type="PANTHER" id="PTHR19271:SF16">
    <property type="entry name" value="CYTOCHROME B"/>
    <property type="match status" value="1"/>
</dbReference>
<dbReference type="Pfam" id="PF00032">
    <property type="entry name" value="Cytochrom_B_C"/>
    <property type="match status" value="1"/>
</dbReference>
<dbReference type="Pfam" id="PF00033">
    <property type="entry name" value="Cytochrome_B"/>
    <property type="match status" value="1"/>
</dbReference>
<dbReference type="PIRSF" id="PIRSF038885">
    <property type="entry name" value="COB"/>
    <property type="match status" value="1"/>
</dbReference>
<dbReference type="SUPFAM" id="SSF81648">
    <property type="entry name" value="a domain/subunit of cytochrome bc1 complex (Ubiquinol-cytochrome c reductase)"/>
    <property type="match status" value="1"/>
</dbReference>
<dbReference type="SUPFAM" id="SSF81342">
    <property type="entry name" value="Transmembrane di-heme cytochromes"/>
    <property type="match status" value="1"/>
</dbReference>
<dbReference type="PROSITE" id="PS51003">
    <property type="entry name" value="CYTB_CTER"/>
    <property type="match status" value="1"/>
</dbReference>
<dbReference type="PROSITE" id="PS51002">
    <property type="entry name" value="CYTB_NTER"/>
    <property type="match status" value="1"/>
</dbReference>
<geneLocation type="mitochondrion"/>
<reference key="1">
    <citation type="thesis" date="1997" institute="Queen's University / Kingston" country="Canada">
        <title>Hic Sunt Serpentes -- molecular phylogenetics and the Boidae (Serpentes: Booidea).</title>
        <authorList>
            <person name="Campbell B.N."/>
        </authorList>
    </citation>
    <scope>NUCLEOTIDE SEQUENCE [GENOMIC DNA]</scope>
</reference>
<organism>
    <name type="scientific">Leiopython albertisii</name>
    <name type="common">Northern white-lipped python</name>
    <name type="synonym">Liasis albertisii</name>
    <dbReference type="NCBI Taxonomy" id="129326"/>
    <lineage>
        <taxon>Eukaryota</taxon>
        <taxon>Metazoa</taxon>
        <taxon>Chordata</taxon>
        <taxon>Craniata</taxon>
        <taxon>Vertebrata</taxon>
        <taxon>Euteleostomi</taxon>
        <taxon>Lepidosauria</taxon>
        <taxon>Squamata</taxon>
        <taxon>Bifurcata</taxon>
        <taxon>Unidentata</taxon>
        <taxon>Episquamata</taxon>
        <taxon>Toxicofera</taxon>
        <taxon>Serpentes</taxon>
        <taxon>Henophidia</taxon>
        <taxon>Pythonidae</taxon>
        <taxon>Leiopython</taxon>
    </lineage>
</organism>
<gene>
    <name type="primary">MT-CYB</name>
    <name type="synonym">COB</name>
    <name type="synonym">CYTB</name>
    <name type="synonym">MTCYB</name>
</gene>
<protein>
    <recommendedName>
        <fullName>Cytochrome b</fullName>
    </recommendedName>
    <alternativeName>
        <fullName>Complex III subunit 3</fullName>
    </alternativeName>
    <alternativeName>
        <fullName>Complex III subunit III</fullName>
    </alternativeName>
    <alternativeName>
        <fullName>Cytochrome b-c1 complex subunit 3</fullName>
    </alternativeName>
    <alternativeName>
        <fullName>Ubiquinol-cytochrome-c reductase complex cytochrome b subunit</fullName>
    </alternativeName>
</protein>
<proteinExistence type="inferred from homology"/>
<name>CYB_LEIAL</name>
<sequence length="371" mass="42147">MPHHYILTLFGLLPVATNISTWWNFGSMLLTCLALQVLTGFFLAVHYTANINLAFSSIIHITRDVPFGWMMQNLHAIGASMFFICIYIHIARGLYYGSYLNKETWMSGITLLITLMATAFFGYVLPWGQMSFWAATVITNLLTAVPYLGTSLTTWLWGGFAINDPTLTRFFALHFILPFAIISLSSLHIILLHEEGSSNPLGTNPDIDKIPFHPYHSHKDLLLLTLMMLSLLIIVSFFPDIFNDPDNFSKANPLVTPQHIKPEWYFLFAYGILRSIPNKLGGALALVMSIMILFTIPFTHTAHLRPMTFRPFSQLMFWTLVSTFITITWAATKPVEPPFIVISQVTSTLYFTFFLLIPILGWTENKMMNTL</sequence>
<feature type="chain" id="PRO_0000061118" description="Cytochrome b">
    <location>
        <begin position="1"/>
        <end position="371"/>
    </location>
</feature>
<feature type="transmembrane region" description="Helical" evidence="2">
    <location>
        <begin position="25"/>
        <end position="45"/>
    </location>
</feature>
<feature type="transmembrane region" description="Helical" evidence="2">
    <location>
        <begin position="69"/>
        <end position="90"/>
    </location>
</feature>
<feature type="transmembrane region" description="Helical" evidence="2">
    <location>
        <begin position="105"/>
        <end position="125"/>
    </location>
</feature>
<feature type="transmembrane region" description="Helical" evidence="2">
    <location>
        <begin position="170"/>
        <end position="190"/>
    </location>
</feature>
<feature type="transmembrane region" description="Helical" evidence="2">
    <location>
        <begin position="218"/>
        <end position="238"/>
    </location>
</feature>
<feature type="transmembrane region" description="Helical" evidence="2">
    <location>
        <begin position="280"/>
        <end position="300"/>
    </location>
</feature>
<feature type="transmembrane region" description="Helical" evidence="2">
    <location>
        <begin position="312"/>
        <end position="332"/>
    </location>
</feature>
<feature type="transmembrane region" description="Helical" evidence="2">
    <location>
        <begin position="339"/>
        <end position="358"/>
    </location>
</feature>
<feature type="binding site" description="axial binding residue" evidence="2">
    <location>
        <position position="75"/>
    </location>
    <ligand>
        <name>heme b</name>
        <dbReference type="ChEBI" id="CHEBI:60344"/>
        <label>b562</label>
    </ligand>
    <ligandPart>
        <name>Fe</name>
        <dbReference type="ChEBI" id="CHEBI:18248"/>
    </ligandPart>
</feature>
<feature type="binding site" description="axial binding residue" evidence="2">
    <location>
        <position position="89"/>
    </location>
    <ligand>
        <name>heme b</name>
        <dbReference type="ChEBI" id="CHEBI:60344"/>
        <label>b566</label>
    </ligand>
    <ligandPart>
        <name>Fe</name>
        <dbReference type="ChEBI" id="CHEBI:18248"/>
    </ligandPart>
</feature>
<feature type="binding site" description="axial binding residue" evidence="2">
    <location>
        <position position="174"/>
    </location>
    <ligand>
        <name>heme b</name>
        <dbReference type="ChEBI" id="CHEBI:60344"/>
        <label>b562</label>
    </ligand>
    <ligandPart>
        <name>Fe</name>
        <dbReference type="ChEBI" id="CHEBI:18248"/>
    </ligandPart>
</feature>
<feature type="binding site" description="axial binding residue" evidence="2">
    <location>
        <position position="188"/>
    </location>
    <ligand>
        <name>heme b</name>
        <dbReference type="ChEBI" id="CHEBI:60344"/>
        <label>b566</label>
    </ligand>
    <ligandPart>
        <name>Fe</name>
        <dbReference type="ChEBI" id="CHEBI:18248"/>
    </ligandPart>
</feature>
<feature type="binding site" evidence="2">
    <location>
        <position position="193"/>
    </location>
    <ligand>
        <name>a ubiquinone</name>
        <dbReference type="ChEBI" id="CHEBI:16389"/>
    </ligand>
</feature>
<evidence type="ECO:0000250" key="1"/>
<evidence type="ECO:0000250" key="2">
    <source>
        <dbReference type="UniProtKB" id="P00157"/>
    </source>
</evidence>
<evidence type="ECO:0000255" key="3">
    <source>
        <dbReference type="PROSITE-ProRule" id="PRU00967"/>
    </source>
</evidence>
<evidence type="ECO:0000255" key="4">
    <source>
        <dbReference type="PROSITE-ProRule" id="PRU00968"/>
    </source>
</evidence>